<feature type="signal peptide" description="Tat-type signal" evidence="1">
    <location>
        <begin position="1"/>
        <end position="44"/>
    </location>
</feature>
<feature type="chain" id="PRO_1000164653" description="Protein-methionine-sulfoxide reductase catalytic subunit MsrP" evidence="1">
    <location>
        <begin position="45"/>
        <end position="313"/>
    </location>
</feature>
<feature type="binding site" evidence="1">
    <location>
        <position position="76"/>
    </location>
    <ligand>
        <name>Mo-molybdopterin</name>
        <dbReference type="ChEBI" id="CHEBI:71302"/>
    </ligand>
</feature>
<feature type="binding site" evidence="1">
    <location>
        <begin position="79"/>
        <end position="80"/>
    </location>
    <ligand>
        <name>Mo-molybdopterin</name>
        <dbReference type="ChEBI" id="CHEBI:71302"/>
    </ligand>
</feature>
<feature type="binding site" evidence="1">
    <location>
        <position position="134"/>
    </location>
    <ligand>
        <name>Mo-molybdopterin</name>
        <dbReference type="ChEBI" id="CHEBI:71302"/>
    </ligand>
    <ligandPart>
        <name>Mo</name>
        <dbReference type="ChEBI" id="CHEBI:28685"/>
    </ligandPart>
</feature>
<feature type="binding site" evidence="1">
    <location>
        <position position="169"/>
    </location>
    <ligand>
        <name>Mo-molybdopterin</name>
        <dbReference type="ChEBI" id="CHEBI:71302"/>
    </ligand>
</feature>
<feature type="binding site" evidence="1">
    <location>
        <position position="217"/>
    </location>
    <ligand>
        <name>Mo-molybdopterin</name>
        <dbReference type="ChEBI" id="CHEBI:71302"/>
    </ligand>
</feature>
<feature type="binding site" evidence="1">
    <location>
        <position position="222"/>
    </location>
    <ligand>
        <name>Mo-molybdopterin</name>
        <dbReference type="ChEBI" id="CHEBI:71302"/>
    </ligand>
</feature>
<feature type="binding site" evidence="1">
    <location>
        <begin position="233"/>
        <end position="235"/>
    </location>
    <ligand>
        <name>Mo-molybdopterin</name>
        <dbReference type="ChEBI" id="CHEBI:71302"/>
    </ligand>
</feature>
<sequence>MARWRPDMAEREATPEALYLRRRDFLALGAAGAVGLLLPRGARAGDPTGAALQVARKVDQAGGETPTPWDSVTGYNNFYELGTSKEDPSRNAGSLRARPWTVTIAGEVKRPQTLDVDALVRMFPPEERVYRMRCVEAWSMVIPWVGFPLADLVRRLEPTSRAKYVAFQTLLDRDQLPGQRRPVLPWPYVEALRIDEANHPLALLAVGLYGRVLPGQNGAPLRLVVPWKYGFKGAKSIVRITFLADRPHTTWNDAAPDEYGFYANVNPEVDHPRWSQARERRIGEFFRRKTLPFNGYAAEVAPLYAGLDLRKNY</sequence>
<reference key="1">
    <citation type="submission" date="2009-01" db="EMBL/GenBank/DDBJ databases">
        <title>Complete sequence of Anaeromyxobacter dehalogenans 2CP-1.</title>
        <authorList>
            <person name="Lucas S."/>
            <person name="Copeland A."/>
            <person name="Lapidus A."/>
            <person name="Glavina del Rio T."/>
            <person name="Dalin E."/>
            <person name="Tice H."/>
            <person name="Bruce D."/>
            <person name="Goodwin L."/>
            <person name="Pitluck S."/>
            <person name="Saunders E."/>
            <person name="Brettin T."/>
            <person name="Detter J.C."/>
            <person name="Han C."/>
            <person name="Larimer F."/>
            <person name="Land M."/>
            <person name="Hauser L."/>
            <person name="Kyrpides N."/>
            <person name="Ovchinnikova G."/>
            <person name="Beliaev A.S."/>
            <person name="Richardson P."/>
        </authorList>
    </citation>
    <scope>NUCLEOTIDE SEQUENCE [LARGE SCALE GENOMIC DNA]</scope>
    <source>
        <strain>2CP-1 / ATCC BAA-258</strain>
    </source>
</reference>
<keyword id="KW-0479">Metal-binding</keyword>
<keyword id="KW-0500">Molybdenum</keyword>
<keyword id="KW-0560">Oxidoreductase</keyword>
<keyword id="KW-0574">Periplasm</keyword>
<keyword id="KW-0732">Signal</keyword>
<organism>
    <name type="scientific">Anaeromyxobacter dehalogenans (strain 2CP-1 / ATCC BAA-258)</name>
    <dbReference type="NCBI Taxonomy" id="455488"/>
    <lineage>
        <taxon>Bacteria</taxon>
        <taxon>Pseudomonadati</taxon>
        <taxon>Myxococcota</taxon>
        <taxon>Myxococcia</taxon>
        <taxon>Myxococcales</taxon>
        <taxon>Cystobacterineae</taxon>
        <taxon>Anaeromyxobacteraceae</taxon>
        <taxon>Anaeromyxobacter</taxon>
    </lineage>
</organism>
<comment type="function">
    <text evidence="1">Part of the MsrPQ system that repairs oxidized periplasmic proteins containing methionine sulfoxide residues (Met-O), using respiratory chain electrons. Thus protects these proteins from oxidative-stress damage caused by reactive species of oxygen and chlorine generated by the host defense mechanisms. MsrPQ is essential for the maintenance of envelope integrity under bleach stress, rescuing a wide series of structurally unrelated periplasmic proteins from methionine oxidation. The catalytic subunit MsrP is non-stereospecific, being able to reduce both (R-) and (S-) diastereoisomers of methionine sulfoxide.</text>
</comment>
<comment type="catalytic activity">
    <reaction evidence="1">
        <text>L-methionyl-[protein] + a quinone + H2O = L-methionyl-(S)-S-oxide-[protein] + a quinol</text>
        <dbReference type="Rhea" id="RHEA:51292"/>
        <dbReference type="Rhea" id="RHEA-COMP:12313"/>
        <dbReference type="Rhea" id="RHEA-COMP:12315"/>
        <dbReference type="ChEBI" id="CHEBI:15377"/>
        <dbReference type="ChEBI" id="CHEBI:16044"/>
        <dbReference type="ChEBI" id="CHEBI:24646"/>
        <dbReference type="ChEBI" id="CHEBI:44120"/>
        <dbReference type="ChEBI" id="CHEBI:132124"/>
    </reaction>
</comment>
<comment type="catalytic activity">
    <reaction evidence="1">
        <text>L-methionyl-[protein] + a quinone + H2O = L-methionyl-(R)-S-oxide-[protein] + a quinol</text>
        <dbReference type="Rhea" id="RHEA:51296"/>
        <dbReference type="Rhea" id="RHEA-COMP:12313"/>
        <dbReference type="Rhea" id="RHEA-COMP:12314"/>
        <dbReference type="ChEBI" id="CHEBI:15377"/>
        <dbReference type="ChEBI" id="CHEBI:16044"/>
        <dbReference type="ChEBI" id="CHEBI:24646"/>
        <dbReference type="ChEBI" id="CHEBI:45764"/>
        <dbReference type="ChEBI" id="CHEBI:132124"/>
    </reaction>
</comment>
<comment type="cofactor">
    <cofactor evidence="1">
        <name>Mo-molybdopterin</name>
        <dbReference type="ChEBI" id="CHEBI:71302"/>
    </cofactor>
    <text evidence="1">Binds 1 Mo-molybdopterin (Mo-MPT) cofactor per subunit.</text>
</comment>
<comment type="subunit">
    <text evidence="1">Heterodimer of a catalytic subunit (MsrP) and a heme-binding subunit (MsrQ).</text>
</comment>
<comment type="subcellular location">
    <subcellularLocation>
        <location evidence="1">Periplasm</location>
    </subcellularLocation>
    <text evidence="1">Is attached to the inner membrane when interacting with the MsrQ subunit.</text>
</comment>
<comment type="PTM">
    <text evidence="1">Predicted to be exported by the Tat system. The position of the signal peptide cleavage has not been experimentally proven.</text>
</comment>
<comment type="similarity">
    <text evidence="1">Belongs to the MsrP family.</text>
</comment>
<proteinExistence type="inferred from homology"/>
<protein>
    <recommendedName>
        <fullName evidence="1">Protein-methionine-sulfoxide reductase catalytic subunit MsrP</fullName>
        <ecNumber evidence="1">1.8.5.-</ecNumber>
    </recommendedName>
</protein>
<name>MSRP_ANAD2</name>
<gene>
    <name evidence="1" type="primary">msrP</name>
    <name type="ordered locus">A2cp1_4120</name>
</gene>
<evidence type="ECO:0000255" key="1">
    <source>
        <dbReference type="HAMAP-Rule" id="MF_01206"/>
    </source>
</evidence>
<accession>B8J9Q0</accession>
<dbReference type="EC" id="1.8.5.-" evidence="1"/>
<dbReference type="EMBL" id="CP001359">
    <property type="protein sequence ID" value="ACL67438.1"/>
    <property type="molecule type" value="Genomic_DNA"/>
</dbReference>
<dbReference type="RefSeq" id="WP_015935157.1">
    <property type="nucleotide sequence ID" value="NC_011891.1"/>
</dbReference>
<dbReference type="SMR" id="B8J9Q0"/>
<dbReference type="KEGG" id="acp:A2cp1_4120"/>
<dbReference type="HOGENOM" id="CLU_045520_0_0_7"/>
<dbReference type="Proteomes" id="UP000007089">
    <property type="component" value="Chromosome"/>
</dbReference>
<dbReference type="GO" id="GO:0042597">
    <property type="term" value="C:periplasmic space"/>
    <property type="evidence" value="ECO:0007669"/>
    <property type="project" value="UniProtKB-SubCell"/>
</dbReference>
<dbReference type="GO" id="GO:0046872">
    <property type="term" value="F:metal ion binding"/>
    <property type="evidence" value="ECO:0007669"/>
    <property type="project" value="UniProtKB-KW"/>
</dbReference>
<dbReference type="GO" id="GO:0043546">
    <property type="term" value="F:molybdopterin cofactor binding"/>
    <property type="evidence" value="ECO:0007669"/>
    <property type="project" value="UniProtKB-UniRule"/>
</dbReference>
<dbReference type="GO" id="GO:0016672">
    <property type="term" value="F:oxidoreductase activity, acting on a sulfur group of donors, quinone or similar compound as acceptor"/>
    <property type="evidence" value="ECO:0007669"/>
    <property type="project" value="UniProtKB-UniRule"/>
</dbReference>
<dbReference type="GO" id="GO:0030091">
    <property type="term" value="P:protein repair"/>
    <property type="evidence" value="ECO:0007669"/>
    <property type="project" value="UniProtKB-UniRule"/>
</dbReference>
<dbReference type="Gene3D" id="3.90.420.10">
    <property type="entry name" value="Oxidoreductase, molybdopterin-binding domain"/>
    <property type="match status" value="1"/>
</dbReference>
<dbReference type="HAMAP" id="MF_01206">
    <property type="entry name" value="MsrP"/>
    <property type="match status" value="1"/>
</dbReference>
<dbReference type="InterPro" id="IPR022867">
    <property type="entry name" value="MsrP"/>
</dbReference>
<dbReference type="InterPro" id="IPR000572">
    <property type="entry name" value="OxRdtase_Mopterin-bd_dom"/>
</dbReference>
<dbReference type="InterPro" id="IPR036374">
    <property type="entry name" value="OxRdtase_Mopterin-bd_sf"/>
</dbReference>
<dbReference type="InterPro" id="IPR006311">
    <property type="entry name" value="TAT_signal"/>
</dbReference>
<dbReference type="NCBIfam" id="NF003767">
    <property type="entry name" value="PRK05363.1"/>
    <property type="match status" value="1"/>
</dbReference>
<dbReference type="PANTHER" id="PTHR43032">
    <property type="entry name" value="PROTEIN-METHIONINE-SULFOXIDE REDUCTASE"/>
    <property type="match status" value="1"/>
</dbReference>
<dbReference type="PANTHER" id="PTHR43032:SF3">
    <property type="entry name" value="PROTEIN-METHIONINE-SULFOXIDE REDUCTASE CATALYTIC SUBUNIT MSRP"/>
    <property type="match status" value="1"/>
</dbReference>
<dbReference type="Pfam" id="PF00174">
    <property type="entry name" value="Oxidored_molyb"/>
    <property type="match status" value="1"/>
</dbReference>
<dbReference type="SUPFAM" id="SSF56524">
    <property type="entry name" value="Oxidoreductase molybdopterin-binding domain"/>
    <property type="match status" value="1"/>
</dbReference>
<dbReference type="PROSITE" id="PS51318">
    <property type="entry name" value="TAT"/>
    <property type="match status" value="1"/>
</dbReference>